<name>CYB5_TOBAC</name>
<keyword id="KW-0249">Electron transport</keyword>
<keyword id="KW-0256">Endoplasmic reticulum</keyword>
<keyword id="KW-0349">Heme</keyword>
<keyword id="KW-0408">Iron</keyword>
<keyword id="KW-0472">Membrane</keyword>
<keyword id="KW-0479">Metal-binding</keyword>
<keyword id="KW-0492">Microsome</keyword>
<keyword id="KW-1185">Reference proteome</keyword>
<keyword id="KW-0812">Transmembrane</keyword>
<keyword id="KW-1133">Transmembrane helix</keyword>
<keyword id="KW-0813">Transport</keyword>
<reference key="1">
    <citation type="journal article" date="1994" name="Plant Mol. Biol.">
        <title>Tobacco cytochrome b5: cDNA isolation, expression analysis and in vitro protein targeting.</title>
        <authorList>
            <person name="Smith M.A."/>
            <person name="Stobart A.K."/>
            <person name="Shewry P.R."/>
            <person name="Napier J.A."/>
        </authorList>
    </citation>
    <scope>NUCLEOTIDE SEQUENCE [MRNA]</scope>
    <source>
        <tissue>Leaf</tissue>
    </source>
</reference>
<comment type="function">
    <text>Cytochrome b5 is a membrane bound hemoprotein which function as an electron carrier for several membrane bound oxygenases. May play a key role in the modification by desaturation of fatty acids in the endoplasmic reticulum, which in the developing seed is utilized for membrane synthesis and in the developmentally regulated production of large amounts of storage lipids. Is involved in the reduction of cytochrome P-450 and may therefore be involved in flavonoid biosynthesis in the petals.</text>
</comment>
<comment type="subcellular location">
    <subcellularLocation>
        <location evidence="1">Endoplasmic reticulum membrane</location>
        <topology evidence="1">Single-pass membrane protein</topology>
        <orientation evidence="1">Cytoplasmic side</orientation>
    </subcellularLocation>
    <subcellularLocation>
        <location evidence="1">Microsome membrane</location>
        <topology evidence="1">Single-pass membrane protein</topology>
        <orientation evidence="1">Cytoplasmic side</orientation>
    </subcellularLocation>
</comment>
<comment type="tissue specificity">
    <text>Is highly expressed in developing seeds, moderately expressed in flowers, and is expressed at low levels in the leaf.</text>
</comment>
<comment type="similarity">
    <text evidence="4">Belongs to the cytochrome b5 family.</text>
</comment>
<comment type="sequence caution" evidence="4">
    <conflict type="erroneous initiation">
        <sequence resource="EMBL-CDS" id="CAA50575"/>
    </conflict>
</comment>
<protein>
    <recommendedName>
        <fullName>Cytochrome b5</fullName>
    </recommendedName>
</protein>
<sequence>MGGETKVFTLAEVSQHNNAKDCWLVISGKVYDVTKFLDDHPGGDEVLLSATGKDATDDFEDVGHSSSARAMLDEYYVGDIDSATIPTKTKYTPPNQPHYNQDKTSEFVVKLLQFLVPLIILGVAFGIRFYTKQSSA</sequence>
<dbReference type="EMBL" id="X71441">
    <property type="protein sequence ID" value="CAA50575.1"/>
    <property type="status" value="ALT_INIT"/>
    <property type="molecule type" value="mRNA"/>
</dbReference>
<dbReference type="EMBL" id="X68140">
    <property type="protein sequence ID" value="CAA48240.1"/>
    <property type="molecule type" value="mRNA"/>
</dbReference>
<dbReference type="PIR" id="S46306">
    <property type="entry name" value="S46306"/>
</dbReference>
<dbReference type="RefSeq" id="XP_016457294.1">
    <property type="nucleotide sequence ID" value="XM_016601808.1"/>
</dbReference>
<dbReference type="RefSeq" id="XP_016498088.1">
    <property type="nucleotide sequence ID" value="XM_016642602.1"/>
</dbReference>
<dbReference type="SMR" id="P49098"/>
<dbReference type="STRING" id="4097.P49098"/>
<dbReference type="PaxDb" id="4097-P49098"/>
<dbReference type="GeneID" id="107781159"/>
<dbReference type="GeneID" id="107816859"/>
<dbReference type="KEGG" id="nta:107781159"/>
<dbReference type="KEGG" id="nta:107816859"/>
<dbReference type="OMA" id="SKDCWIV"/>
<dbReference type="OrthoDB" id="260519at2759"/>
<dbReference type="PhylomeDB" id="P49098"/>
<dbReference type="Proteomes" id="UP000084051">
    <property type="component" value="Unplaced"/>
</dbReference>
<dbReference type="GO" id="GO:0005789">
    <property type="term" value="C:endoplasmic reticulum membrane"/>
    <property type="evidence" value="ECO:0007669"/>
    <property type="project" value="UniProtKB-SubCell"/>
</dbReference>
<dbReference type="GO" id="GO:0043231">
    <property type="term" value="C:intracellular membrane-bounded organelle"/>
    <property type="evidence" value="ECO:0000318"/>
    <property type="project" value="GO_Central"/>
</dbReference>
<dbReference type="GO" id="GO:0016020">
    <property type="term" value="C:membrane"/>
    <property type="evidence" value="ECO:0000318"/>
    <property type="project" value="GO_Central"/>
</dbReference>
<dbReference type="GO" id="GO:0020037">
    <property type="term" value="F:heme binding"/>
    <property type="evidence" value="ECO:0000318"/>
    <property type="project" value="GO_Central"/>
</dbReference>
<dbReference type="GO" id="GO:0046872">
    <property type="term" value="F:metal ion binding"/>
    <property type="evidence" value="ECO:0007669"/>
    <property type="project" value="UniProtKB-KW"/>
</dbReference>
<dbReference type="FunFam" id="3.10.120.10:FF:000002">
    <property type="entry name" value="Cytochrome b5 type B"/>
    <property type="match status" value="1"/>
</dbReference>
<dbReference type="Gene3D" id="3.10.120.10">
    <property type="entry name" value="Cytochrome b5-like heme/steroid binding domain"/>
    <property type="match status" value="1"/>
</dbReference>
<dbReference type="InterPro" id="IPR001199">
    <property type="entry name" value="Cyt_B5-like_heme/steroid-bd"/>
</dbReference>
<dbReference type="InterPro" id="IPR036400">
    <property type="entry name" value="Cyt_B5-like_heme/steroid_sf"/>
</dbReference>
<dbReference type="InterPro" id="IPR018506">
    <property type="entry name" value="Cyt_B5_heme-BS"/>
</dbReference>
<dbReference type="InterPro" id="IPR050668">
    <property type="entry name" value="Cytochrome_b5"/>
</dbReference>
<dbReference type="PANTHER" id="PTHR19359">
    <property type="entry name" value="CYTOCHROME B5"/>
    <property type="match status" value="1"/>
</dbReference>
<dbReference type="PANTHER" id="PTHR19359:SF129">
    <property type="entry name" value="CYTOCHROME B5 ISOFORM B"/>
    <property type="match status" value="1"/>
</dbReference>
<dbReference type="Pfam" id="PF00173">
    <property type="entry name" value="Cyt-b5"/>
    <property type="match status" value="1"/>
</dbReference>
<dbReference type="PRINTS" id="PR00363">
    <property type="entry name" value="CYTOCHROMEB5"/>
</dbReference>
<dbReference type="SMART" id="SM01117">
    <property type="entry name" value="Cyt-b5"/>
    <property type="match status" value="1"/>
</dbReference>
<dbReference type="SUPFAM" id="SSF55856">
    <property type="entry name" value="Cytochrome b5-like heme/steroid binding domain"/>
    <property type="match status" value="1"/>
</dbReference>
<dbReference type="PROSITE" id="PS00191">
    <property type="entry name" value="CYTOCHROME_B5_1"/>
    <property type="match status" value="1"/>
</dbReference>
<dbReference type="PROSITE" id="PS50255">
    <property type="entry name" value="CYTOCHROME_B5_2"/>
    <property type="match status" value="1"/>
</dbReference>
<proteinExistence type="evidence at transcript level"/>
<accession>P49098</accession>
<feature type="chain" id="PRO_0000166025" description="Cytochrome b5">
    <location>
        <begin position="1"/>
        <end position="136"/>
    </location>
</feature>
<feature type="transmembrane region" description="Helical" evidence="2">
    <location>
        <begin position="107"/>
        <end position="127"/>
    </location>
</feature>
<feature type="domain" description="Cytochrome b5 heme-binding" evidence="3">
    <location>
        <begin position="5"/>
        <end position="81"/>
    </location>
</feature>
<feature type="binding site" description="axial binding residue" evidence="3">
    <location>
        <position position="40"/>
    </location>
    <ligand>
        <name>heme</name>
        <dbReference type="ChEBI" id="CHEBI:30413"/>
    </ligand>
    <ligandPart>
        <name>Fe</name>
        <dbReference type="ChEBI" id="CHEBI:18248"/>
    </ligandPart>
</feature>
<feature type="binding site" description="axial binding residue" evidence="3">
    <location>
        <position position="64"/>
    </location>
    <ligand>
        <name>heme</name>
        <dbReference type="ChEBI" id="CHEBI:30413"/>
    </ligand>
    <ligandPart>
        <name>Fe</name>
        <dbReference type="ChEBI" id="CHEBI:18248"/>
    </ligandPart>
</feature>
<feature type="sequence conflict" description="In Ref. 1; CAA48240." evidence="4" ref="1">
    <original>LA</original>
    <variation>EF</variation>
    <location>
        <begin position="10"/>
        <end position="11"/>
    </location>
</feature>
<feature type="sequence conflict" description="In Ref. 1; CAA48240." evidence="4" ref="1">
    <location>
        <position position="105"/>
    </location>
</feature>
<organism>
    <name type="scientific">Nicotiana tabacum</name>
    <name type="common">Common tobacco</name>
    <dbReference type="NCBI Taxonomy" id="4097"/>
    <lineage>
        <taxon>Eukaryota</taxon>
        <taxon>Viridiplantae</taxon>
        <taxon>Streptophyta</taxon>
        <taxon>Embryophyta</taxon>
        <taxon>Tracheophyta</taxon>
        <taxon>Spermatophyta</taxon>
        <taxon>Magnoliopsida</taxon>
        <taxon>eudicotyledons</taxon>
        <taxon>Gunneridae</taxon>
        <taxon>Pentapetalae</taxon>
        <taxon>asterids</taxon>
        <taxon>lamiids</taxon>
        <taxon>Solanales</taxon>
        <taxon>Solanaceae</taxon>
        <taxon>Nicotianoideae</taxon>
        <taxon>Nicotianeae</taxon>
        <taxon>Nicotiana</taxon>
    </lineage>
</organism>
<evidence type="ECO:0000250" key="1"/>
<evidence type="ECO:0000255" key="2"/>
<evidence type="ECO:0000255" key="3">
    <source>
        <dbReference type="PROSITE-ProRule" id="PRU00279"/>
    </source>
</evidence>
<evidence type="ECO:0000305" key="4"/>